<feature type="chain" id="PRO_0000382300" description="Glutamate-1-semialdehyde 2,1-aminomutase">
    <location>
        <begin position="1"/>
        <end position="447"/>
    </location>
</feature>
<feature type="modified residue" description="N6-(pyridoxal phosphate)lysine" evidence="1">
    <location>
        <position position="283"/>
    </location>
</feature>
<sequence>MASTNTNVNAAAEERHHESAAAMERARRFIPGGVNSPVRAFGSVGGTSPFITSASGSQLQDADGLSYVDLVCSWGPMIHGHAHPEIVEAVKSTASRGLSFGAPTSLEVDLAEEIVNRTSVEKVRLVNSGTEATMSAVRLARGFTGRDKILKFEGCYHGHVDSLLVAAGSGVATFGLPDSPGITKAAASDTVVVPYRDIEAVKKAFAENEGQIAAIITEATPGNMGTVSSITADGTSFNAQLKEIAHANGALLIVDEVMTGFRVGYQGWFGKDGVAGDLTTFGKVVSGGLPAAAFGGRADIMDHLAPVGPVYQAGTLSGNPVAMASGLASLKLADEDAYRTLDANAERLIGLITEALNRESVEHHIQRAGTMFSVRFADGEGTNFGEMKAADTFRYPAFFHELLDNGIFAPPSVFETWFVSTALTDADFERFEAALVPAAKAAAAAEA</sequence>
<proteinExistence type="inferred from homology"/>
<keyword id="KW-0963">Cytoplasm</keyword>
<keyword id="KW-0413">Isomerase</keyword>
<keyword id="KW-0627">Porphyrin biosynthesis</keyword>
<keyword id="KW-0663">Pyridoxal phosphate</keyword>
<keyword id="KW-1185">Reference proteome</keyword>
<evidence type="ECO:0000255" key="1">
    <source>
        <dbReference type="HAMAP-Rule" id="MF_00375"/>
    </source>
</evidence>
<organism>
    <name type="scientific">Corynebacterium urealyticum (strain ATCC 43042 / DSM 7109)</name>
    <dbReference type="NCBI Taxonomy" id="504474"/>
    <lineage>
        <taxon>Bacteria</taxon>
        <taxon>Bacillati</taxon>
        <taxon>Actinomycetota</taxon>
        <taxon>Actinomycetes</taxon>
        <taxon>Mycobacteriales</taxon>
        <taxon>Corynebacteriaceae</taxon>
        <taxon>Corynebacterium</taxon>
    </lineage>
</organism>
<dbReference type="EC" id="5.4.3.8" evidence="1"/>
<dbReference type="EMBL" id="AM942444">
    <property type="protein sequence ID" value="CAQ04192.1"/>
    <property type="molecule type" value="Genomic_DNA"/>
</dbReference>
<dbReference type="RefSeq" id="WP_012359498.1">
    <property type="nucleotide sequence ID" value="NC_010545.1"/>
</dbReference>
<dbReference type="SMR" id="B1VEK3"/>
<dbReference type="STRING" id="504474.cu0232"/>
<dbReference type="GeneID" id="60605032"/>
<dbReference type="KEGG" id="cur:cu0232"/>
<dbReference type="eggNOG" id="COG0001">
    <property type="taxonomic scope" value="Bacteria"/>
</dbReference>
<dbReference type="HOGENOM" id="CLU_016922_1_5_11"/>
<dbReference type="UniPathway" id="UPA00251">
    <property type="reaction ID" value="UER00317"/>
</dbReference>
<dbReference type="Proteomes" id="UP000001727">
    <property type="component" value="Chromosome"/>
</dbReference>
<dbReference type="GO" id="GO:0005737">
    <property type="term" value="C:cytoplasm"/>
    <property type="evidence" value="ECO:0007669"/>
    <property type="project" value="UniProtKB-SubCell"/>
</dbReference>
<dbReference type="GO" id="GO:0042286">
    <property type="term" value="F:glutamate-1-semialdehyde 2,1-aminomutase activity"/>
    <property type="evidence" value="ECO:0007669"/>
    <property type="project" value="UniProtKB-UniRule"/>
</dbReference>
<dbReference type="GO" id="GO:0030170">
    <property type="term" value="F:pyridoxal phosphate binding"/>
    <property type="evidence" value="ECO:0007669"/>
    <property type="project" value="InterPro"/>
</dbReference>
<dbReference type="GO" id="GO:0008483">
    <property type="term" value="F:transaminase activity"/>
    <property type="evidence" value="ECO:0007669"/>
    <property type="project" value="InterPro"/>
</dbReference>
<dbReference type="GO" id="GO:0006782">
    <property type="term" value="P:protoporphyrinogen IX biosynthetic process"/>
    <property type="evidence" value="ECO:0007669"/>
    <property type="project" value="UniProtKB-UniRule"/>
</dbReference>
<dbReference type="CDD" id="cd00610">
    <property type="entry name" value="OAT_like"/>
    <property type="match status" value="1"/>
</dbReference>
<dbReference type="FunFam" id="3.40.640.10:FF:000021">
    <property type="entry name" value="Glutamate-1-semialdehyde 2,1-aminomutase"/>
    <property type="match status" value="1"/>
</dbReference>
<dbReference type="Gene3D" id="3.90.1150.10">
    <property type="entry name" value="Aspartate Aminotransferase, domain 1"/>
    <property type="match status" value="1"/>
</dbReference>
<dbReference type="Gene3D" id="3.40.640.10">
    <property type="entry name" value="Type I PLP-dependent aspartate aminotransferase-like (Major domain)"/>
    <property type="match status" value="1"/>
</dbReference>
<dbReference type="HAMAP" id="MF_00375">
    <property type="entry name" value="HemL_aminotrans_3"/>
    <property type="match status" value="1"/>
</dbReference>
<dbReference type="InterPro" id="IPR004639">
    <property type="entry name" value="4pyrrol_synth_GluAld_NH2Trfase"/>
</dbReference>
<dbReference type="InterPro" id="IPR005814">
    <property type="entry name" value="Aminotrans_3"/>
</dbReference>
<dbReference type="InterPro" id="IPR049704">
    <property type="entry name" value="Aminotrans_3_PPA_site"/>
</dbReference>
<dbReference type="InterPro" id="IPR015424">
    <property type="entry name" value="PyrdxlP-dep_Trfase"/>
</dbReference>
<dbReference type="InterPro" id="IPR015421">
    <property type="entry name" value="PyrdxlP-dep_Trfase_major"/>
</dbReference>
<dbReference type="InterPro" id="IPR015422">
    <property type="entry name" value="PyrdxlP-dep_Trfase_small"/>
</dbReference>
<dbReference type="NCBIfam" id="TIGR00713">
    <property type="entry name" value="hemL"/>
    <property type="match status" value="1"/>
</dbReference>
<dbReference type="NCBIfam" id="NF000818">
    <property type="entry name" value="PRK00062.1"/>
    <property type="match status" value="1"/>
</dbReference>
<dbReference type="PANTHER" id="PTHR43713">
    <property type="entry name" value="GLUTAMATE-1-SEMIALDEHYDE 2,1-AMINOMUTASE"/>
    <property type="match status" value="1"/>
</dbReference>
<dbReference type="PANTHER" id="PTHR43713:SF3">
    <property type="entry name" value="GLUTAMATE-1-SEMIALDEHYDE 2,1-AMINOMUTASE 1, CHLOROPLASTIC-RELATED"/>
    <property type="match status" value="1"/>
</dbReference>
<dbReference type="Pfam" id="PF00202">
    <property type="entry name" value="Aminotran_3"/>
    <property type="match status" value="1"/>
</dbReference>
<dbReference type="SUPFAM" id="SSF53383">
    <property type="entry name" value="PLP-dependent transferases"/>
    <property type="match status" value="1"/>
</dbReference>
<dbReference type="PROSITE" id="PS00600">
    <property type="entry name" value="AA_TRANSFER_CLASS_3"/>
    <property type="match status" value="1"/>
</dbReference>
<name>GSA_CORU7</name>
<protein>
    <recommendedName>
        <fullName evidence="1">Glutamate-1-semialdehyde 2,1-aminomutase</fullName>
        <shortName evidence="1">GSA</shortName>
        <ecNumber evidence="1">5.4.3.8</ecNumber>
    </recommendedName>
    <alternativeName>
        <fullName evidence="1">Glutamate-1-semialdehyde aminotransferase</fullName>
        <shortName evidence="1">GSA-AT</shortName>
    </alternativeName>
</protein>
<comment type="catalytic activity">
    <reaction evidence="1">
        <text>(S)-4-amino-5-oxopentanoate = 5-aminolevulinate</text>
        <dbReference type="Rhea" id="RHEA:14265"/>
        <dbReference type="ChEBI" id="CHEBI:57501"/>
        <dbReference type="ChEBI" id="CHEBI:356416"/>
        <dbReference type="EC" id="5.4.3.8"/>
    </reaction>
</comment>
<comment type="cofactor">
    <cofactor evidence="1">
        <name>pyridoxal 5'-phosphate</name>
        <dbReference type="ChEBI" id="CHEBI:597326"/>
    </cofactor>
</comment>
<comment type="pathway">
    <text evidence="1">Porphyrin-containing compound metabolism; protoporphyrin-IX biosynthesis; 5-aminolevulinate from L-glutamyl-tRNA(Glu): step 2/2.</text>
</comment>
<comment type="subunit">
    <text evidence="1">Homodimer.</text>
</comment>
<comment type="subcellular location">
    <subcellularLocation>
        <location evidence="1">Cytoplasm</location>
    </subcellularLocation>
</comment>
<comment type="similarity">
    <text evidence="1">Belongs to the class-III pyridoxal-phosphate-dependent aminotransferase family. HemL subfamily.</text>
</comment>
<accession>B1VEK3</accession>
<reference key="1">
    <citation type="journal article" date="2008" name="J. Biotechnol.">
        <title>The lifestyle of Corynebacterium urealyticum derived from its complete genome sequence established by pyrosequencing.</title>
        <authorList>
            <person name="Tauch A."/>
            <person name="Trost E."/>
            <person name="Tilker A."/>
            <person name="Ludewig U."/>
            <person name="Schneiker S."/>
            <person name="Goesmann A."/>
            <person name="Arnold W."/>
            <person name="Bekel T."/>
            <person name="Brinkrolf K."/>
            <person name="Brune I."/>
            <person name="Goetker S."/>
            <person name="Kalinowski J."/>
            <person name="Kamp P.-B."/>
            <person name="Lobo F.P."/>
            <person name="Viehoever P."/>
            <person name="Weisshaar B."/>
            <person name="Soriano F."/>
            <person name="Droege M."/>
            <person name="Puehler A."/>
        </authorList>
    </citation>
    <scope>NUCLEOTIDE SEQUENCE [LARGE SCALE GENOMIC DNA]</scope>
    <source>
        <strain>ATCC 43042 / DSM 7109</strain>
    </source>
</reference>
<gene>
    <name evidence="1" type="primary">hemL</name>
    <name type="ordered locus">cu0232</name>
</gene>